<name>DAPB_SYNS9</name>
<gene>
    <name evidence="1" type="primary">dapB</name>
    <name type="ordered locus">Syncc9902_0826</name>
</gene>
<evidence type="ECO:0000255" key="1">
    <source>
        <dbReference type="HAMAP-Rule" id="MF_00102"/>
    </source>
</evidence>
<evidence type="ECO:0000305" key="2"/>
<sequence length="277" mass="29348">MSSPIPVVVAGALGRMGAEVINAVVNAEDCQLVGAIDNTPGKEGTDVGLELGIKELEVAVTADFEGCLCAVSQSVRNSDQNAVLVDFTHPSVVFDHTRAAIAYGVHPVIGTTGLSPIQLNDLTEFSAKASIGGAVIPNFSVGMVLLQQAAAAAARFYDHAELTELHHNRKADAPSGTCIKTAELMEEVKQSFNPAEVDEHESLQGSRGGVRDSGLNLHSLRLPGLVAHQEVMFGAPGETYTLRHDTIDRSAYMPGVLLTIRKVGSLQQLVYGLERLI</sequence>
<proteinExistence type="inferred from homology"/>
<feature type="chain" id="PRO_1000008655" description="4-hydroxy-tetrahydrodipicolinate reductase">
    <location>
        <begin position="1"/>
        <end position="277"/>
    </location>
</feature>
<feature type="active site" description="Proton donor/acceptor" evidence="1">
    <location>
        <position position="166"/>
    </location>
</feature>
<feature type="active site" description="Proton donor" evidence="1">
    <location>
        <position position="170"/>
    </location>
</feature>
<feature type="binding site" evidence="1">
    <location>
        <begin position="11"/>
        <end position="16"/>
    </location>
    <ligand>
        <name>NAD(+)</name>
        <dbReference type="ChEBI" id="CHEBI:57540"/>
    </ligand>
</feature>
<feature type="binding site" evidence="1">
    <location>
        <begin position="110"/>
        <end position="112"/>
    </location>
    <ligand>
        <name>NAD(+)</name>
        <dbReference type="ChEBI" id="CHEBI:57540"/>
    </ligand>
</feature>
<feature type="binding site" evidence="1">
    <location>
        <position position="167"/>
    </location>
    <ligand>
        <name>(S)-2,3,4,5-tetrahydrodipicolinate</name>
        <dbReference type="ChEBI" id="CHEBI:16845"/>
    </ligand>
</feature>
<feature type="binding site" evidence="1">
    <location>
        <begin position="176"/>
        <end position="177"/>
    </location>
    <ligand>
        <name>(S)-2,3,4,5-tetrahydrodipicolinate</name>
        <dbReference type="ChEBI" id="CHEBI:16845"/>
    </ligand>
</feature>
<accession>Q3AYN5</accession>
<protein>
    <recommendedName>
        <fullName evidence="1">4-hydroxy-tetrahydrodipicolinate reductase</fullName>
        <shortName evidence="1">HTPA reductase</shortName>
        <ecNumber evidence="1">1.17.1.8</ecNumber>
    </recommendedName>
</protein>
<dbReference type="EC" id="1.17.1.8" evidence="1"/>
<dbReference type="EMBL" id="CP000097">
    <property type="protein sequence ID" value="ABB25792.1"/>
    <property type="molecule type" value="Genomic_DNA"/>
</dbReference>
<dbReference type="RefSeq" id="WP_011359631.1">
    <property type="nucleotide sequence ID" value="NC_007513.1"/>
</dbReference>
<dbReference type="SMR" id="Q3AYN5"/>
<dbReference type="STRING" id="316279.Syncc9902_0826"/>
<dbReference type="KEGG" id="sye:Syncc9902_0826"/>
<dbReference type="eggNOG" id="COG0289">
    <property type="taxonomic scope" value="Bacteria"/>
</dbReference>
<dbReference type="HOGENOM" id="CLU_047479_0_0_3"/>
<dbReference type="OrthoDB" id="9790352at2"/>
<dbReference type="UniPathway" id="UPA00034">
    <property type="reaction ID" value="UER00018"/>
</dbReference>
<dbReference type="Proteomes" id="UP000002712">
    <property type="component" value="Chromosome"/>
</dbReference>
<dbReference type="GO" id="GO:0005829">
    <property type="term" value="C:cytosol"/>
    <property type="evidence" value="ECO:0007669"/>
    <property type="project" value="TreeGrafter"/>
</dbReference>
<dbReference type="GO" id="GO:0008839">
    <property type="term" value="F:4-hydroxy-tetrahydrodipicolinate reductase"/>
    <property type="evidence" value="ECO:0007669"/>
    <property type="project" value="UniProtKB-EC"/>
</dbReference>
<dbReference type="GO" id="GO:0051287">
    <property type="term" value="F:NAD binding"/>
    <property type="evidence" value="ECO:0007669"/>
    <property type="project" value="UniProtKB-UniRule"/>
</dbReference>
<dbReference type="GO" id="GO:0050661">
    <property type="term" value="F:NADP binding"/>
    <property type="evidence" value="ECO:0007669"/>
    <property type="project" value="UniProtKB-UniRule"/>
</dbReference>
<dbReference type="GO" id="GO:0016726">
    <property type="term" value="F:oxidoreductase activity, acting on CH or CH2 groups, NAD or NADP as acceptor"/>
    <property type="evidence" value="ECO:0007669"/>
    <property type="project" value="UniProtKB-UniRule"/>
</dbReference>
<dbReference type="GO" id="GO:0019877">
    <property type="term" value="P:diaminopimelate biosynthetic process"/>
    <property type="evidence" value="ECO:0007669"/>
    <property type="project" value="UniProtKB-UniRule"/>
</dbReference>
<dbReference type="GO" id="GO:0009089">
    <property type="term" value="P:lysine biosynthetic process via diaminopimelate"/>
    <property type="evidence" value="ECO:0007669"/>
    <property type="project" value="UniProtKB-UniRule"/>
</dbReference>
<dbReference type="CDD" id="cd02274">
    <property type="entry name" value="DHDPR_N"/>
    <property type="match status" value="1"/>
</dbReference>
<dbReference type="FunFam" id="3.30.360.10:FF:000009">
    <property type="entry name" value="4-hydroxy-tetrahydrodipicolinate reductase"/>
    <property type="match status" value="1"/>
</dbReference>
<dbReference type="Gene3D" id="3.30.360.10">
    <property type="entry name" value="Dihydrodipicolinate Reductase, domain 2"/>
    <property type="match status" value="1"/>
</dbReference>
<dbReference type="Gene3D" id="3.40.50.720">
    <property type="entry name" value="NAD(P)-binding Rossmann-like Domain"/>
    <property type="match status" value="1"/>
</dbReference>
<dbReference type="HAMAP" id="MF_00102">
    <property type="entry name" value="DapB"/>
    <property type="match status" value="1"/>
</dbReference>
<dbReference type="InterPro" id="IPR022663">
    <property type="entry name" value="DapB_C"/>
</dbReference>
<dbReference type="InterPro" id="IPR000846">
    <property type="entry name" value="DapB_N"/>
</dbReference>
<dbReference type="InterPro" id="IPR022664">
    <property type="entry name" value="DapB_N_CS"/>
</dbReference>
<dbReference type="InterPro" id="IPR023940">
    <property type="entry name" value="DHDPR_bac"/>
</dbReference>
<dbReference type="InterPro" id="IPR036291">
    <property type="entry name" value="NAD(P)-bd_dom_sf"/>
</dbReference>
<dbReference type="NCBIfam" id="TIGR00036">
    <property type="entry name" value="dapB"/>
    <property type="match status" value="1"/>
</dbReference>
<dbReference type="PANTHER" id="PTHR20836:SF0">
    <property type="entry name" value="4-HYDROXY-TETRAHYDRODIPICOLINATE REDUCTASE 1, CHLOROPLASTIC-RELATED"/>
    <property type="match status" value="1"/>
</dbReference>
<dbReference type="PANTHER" id="PTHR20836">
    <property type="entry name" value="DIHYDRODIPICOLINATE REDUCTASE"/>
    <property type="match status" value="1"/>
</dbReference>
<dbReference type="Pfam" id="PF05173">
    <property type="entry name" value="DapB_C"/>
    <property type="match status" value="1"/>
</dbReference>
<dbReference type="Pfam" id="PF01113">
    <property type="entry name" value="DapB_N"/>
    <property type="match status" value="1"/>
</dbReference>
<dbReference type="PIRSF" id="PIRSF000161">
    <property type="entry name" value="DHPR"/>
    <property type="match status" value="1"/>
</dbReference>
<dbReference type="SUPFAM" id="SSF55347">
    <property type="entry name" value="Glyceraldehyde-3-phosphate dehydrogenase-like, C-terminal domain"/>
    <property type="match status" value="1"/>
</dbReference>
<dbReference type="SUPFAM" id="SSF51735">
    <property type="entry name" value="NAD(P)-binding Rossmann-fold domains"/>
    <property type="match status" value="1"/>
</dbReference>
<dbReference type="PROSITE" id="PS01298">
    <property type="entry name" value="DAPB"/>
    <property type="match status" value="1"/>
</dbReference>
<reference key="1">
    <citation type="submission" date="2005-08" db="EMBL/GenBank/DDBJ databases">
        <title>Complete sequence of Synechococcus sp. CC9902.</title>
        <authorList>
            <person name="Copeland A."/>
            <person name="Lucas S."/>
            <person name="Lapidus A."/>
            <person name="Barry K."/>
            <person name="Detter J.C."/>
            <person name="Glavina T."/>
            <person name="Hammon N."/>
            <person name="Israni S."/>
            <person name="Pitluck S."/>
            <person name="Martinez M."/>
            <person name="Schmutz J."/>
            <person name="Larimer F."/>
            <person name="Land M."/>
            <person name="Kyrpides N."/>
            <person name="Ivanova N."/>
            <person name="Richardson P."/>
        </authorList>
    </citation>
    <scope>NUCLEOTIDE SEQUENCE [LARGE SCALE GENOMIC DNA]</scope>
    <source>
        <strain>CC9902</strain>
    </source>
</reference>
<keyword id="KW-0028">Amino-acid biosynthesis</keyword>
<keyword id="KW-0963">Cytoplasm</keyword>
<keyword id="KW-0220">Diaminopimelate biosynthesis</keyword>
<keyword id="KW-0457">Lysine biosynthesis</keyword>
<keyword id="KW-0520">NAD</keyword>
<keyword id="KW-0521">NADP</keyword>
<keyword id="KW-0560">Oxidoreductase</keyword>
<keyword id="KW-1185">Reference proteome</keyword>
<organism>
    <name type="scientific">Synechococcus sp. (strain CC9902)</name>
    <dbReference type="NCBI Taxonomy" id="316279"/>
    <lineage>
        <taxon>Bacteria</taxon>
        <taxon>Bacillati</taxon>
        <taxon>Cyanobacteriota</taxon>
        <taxon>Cyanophyceae</taxon>
        <taxon>Synechococcales</taxon>
        <taxon>Synechococcaceae</taxon>
        <taxon>Synechococcus</taxon>
    </lineage>
</organism>
<comment type="function">
    <text evidence="1">Catalyzes the conversion of 4-hydroxy-tetrahydrodipicolinate (HTPA) to tetrahydrodipicolinate.</text>
</comment>
<comment type="catalytic activity">
    <reaction evidence="1">
        <text>(S)-2,3,4,5-tetrahydrodipicolinate + NAD(+) + H2O = (2S,4S)-4-hydroxy-2,3,4,5-tetrahydrodipicolinate + NADH + H(+)</text>
        <dbReference type="Rhea" id="RHEA:35323"/>
        <dbReference type="ChEBI" id="CHEBI:15377"/>
        <dbReference type="ChEBI" id="CHEBI:15378"/>
        <dbReference type="ChEBI" id="CHEBI:16845"/>
        <dbReference type="ChEBI" id="CHEBI:57540"/>
        <dbReference type="ChEBI" id="CHEBI:57945"/>
        <dbReference type="ChEBI" id="CHEBI:67139"/>
        <dbReference type="EC" id="1.17.1.8"/>
    </reaction>
</comment>
<comment type="catalytic activity">
    <reaction evidence="1">
        <text>(S)-2,3,4,5-tetrahydrodipicolinate + NADP(+) + H2O = (2S,4S)-4-hydroxy-2,3,4,5-tetrahydrodipicolinate + NADPH + H(+)</text>
        <dbReference type="Rhea" id="RHEA:35331"/>
        <dbReference type="ChEBI" id="CHEBI:15377"/>
        <dbReference type="ChEBI" id="CHEBI:15378"/>
        <dbReference type="ChEBI" id="CHEBI:16845"/>
        <dbReference type="ChEBI" id="CHEBI:57783"/>
        <dbReference type="ChEBI" id="CHEBI:58349"/>
        <dbReference type="ChEBI" id="CHEBI:67139"/>
        <dbReference type="EC" id="1.17.1.8"/>
    </reaction>
</comment>
<comment type="pathway">
    <text evidence="1">Amino-acid biosynthesis; L-lysine biosynthesis via DAP pathway; (S)-tetrahydrodipicolinate from L-aspartate: step 4/4.</text>
</comment>
<comment type="subcellular location">
    <subcellularLocation>
        <location evidence="1">Cytoplasm</location>
    </subcellularLocation>
</comment>
<comment type="similarity">
    <text evidence="1">Belongs to the DapB family.</text>
</comment>
<comment type="caution">
    <text evidence="2">Was originally thought to be a dihydrodipicolinate reductase (DHDPR), catalyzing the conversion of dihydrodipicolinate to tetrahydrodipicolinate. However, it was shown in E.coli that the substrate of the enzymatic reaction is not dihydrodipicolinate (DHDP) but in fact (2S,4S)-4-hydroxy-2,3,4,5-tetrahydrodipicolinic acid (HTPA), the product released by the DapA-catalyzed reaction.</text>
</comment>